<protein>
    <recommendedName>
        <fullName evidence="1">Aspartyl/glutamyl-tRNA(Asn/Gln) amidotransferase subunit C</fullName>
        <shortName evidence="1">Asp/Glu-ADT subunit C</shortName>
        <ecNumber evidence="1">6.3.5.-</ecNumber>
    </recommendedName>
</protein>
<sequence>MAKINEEQVRHVAHLARLAVTDEEVQQFTVQLEKILGFAEQLNELDTTGIEPTTHVLDLKNVLRKDEVRPSLPRTEVERLAPDWEDGQVRVPAVFE</sequence>
<feature type="chain" id="PRO_1000095283" description="Aspartyl/glutamyl-tRNA(Asn/Gln) amidotransferase subunit C">
    <location>
        <begin position="1"/>
        <end position="96"/>
    </location>
</feature>
<comment type="function">
    <text evidence="1">Allows the formation of correctly charged Asn-tRNA(Asn) or Gln-tRNA(Gln) through the transamidation of misacylated Asp-tRNA(Asn) or Glu-tRNA(Gln) in organisms which lack either or both of asparaginyl-tRNA or glutaminyl-tRNA synthetases. The reaction takes place in the presence of glutamine and ATP through an activated phospho-Asp-tRNA(Asn) or phospho-Glu-tRNA(Gln).</text>
</comment>
<comment type="catalytic activity">
    <reaction evidence="1">
        <text>L-glutamyl-tRNA(Gln) + L-glutamine + ATP + H2O = L-glutaminyl-tRNA(Gln) + L-glutamate + ADP + phosphate + H(+)</text>
        <dbReference type="Rhea" id="RHEA:17521"/>
        <dbReference type="Rhea" id="RHEA-COMP:9681"/>
        <dbReference type="Rhea" id="RHEA-COMP:9684"/>
        <dbReference type="ChEBI" id="CHEBI:15377"/>
        <dbReference type="ChEBI" id="CHEBI:15378"/>
        <dbReference type="ChEBI" id="CHEBI:29985"/>
        <dbReference type="ChEBI" id="CHEBI:30616"/>
        <dbReference type="ChEBI" id="CHEBI:43474"/>
        <dbReference type="ChEBI" id="CHEBI:58359"/>
        <dbReference type="ChEBI" id="CHEBI:78520"/>
        <dbReference type="ChEBI" id="CHEBI:78521"/>
        <dbReference type="ChEBI" id="CHEBI:456216"/>
    </reaction>
</comment>
<comment type="catalytic activity">
    <reaction evidence="1">
        <text>L-aspartyl-tRNA(Asn) + L-glutamine + ATP + H2O = L-asparaginyl-tRNA(Asn) + L-glutamate + ADP + phosphate + 2 H(+)</text>
        <dbReference type="Rhea" id="RHEA:14513"/>
        <dbReference type="Rhea" id="RHEA-COMP:9674"/>
        <dbReference type="Rhea" id="RHEA-COMP:9677"/>
        <dbReference type="ChEBI" id="CHEBI:15377"/>
        <dbReference type="ChEBI" id="CHEBI:15378"/>
        <dbReference type="ChEBI" id="CHEBI:29985"/>
        <dbReference type="ChEBI" id="CHEBI:30616"/>
        <dbReference type="ChEBI" id="CHEBI:43474"/>
        <dbReference type="ChEBI" id="CHEBI:58359"/>
        <dbReference type="ChEBI" id="CHEBI:78515"/>
        <dbReference type="ChEBI" id="CHEBI:78516"/>
        <dbReference type="ChEBI" id="CHEBI:456216"/>
    </reaction>
</comment>
<comment type="subunit">
    <text evidence="1">Heterotrimer of A, B and C subunits.</text>
</comment>
<comment type="similarity">
    <text evidence="1">Belongs to the GatC family.</text>
</comment>
<dbReference type="EC" id="6.3.5.-" evidence="1"/>
<dbReference type="EMBL" id="CP001022">
    <property type="protein sequence ID" value="ACB61960.1"/>
    <property type="molecule type" value="Genomic_DNA"/>
</dbReference>
<dbReference type="RefSeq" id="WP_012371376.1">
    <property type="nucleotide sequence ID" value="NC_010556.1"/>
</dbReference>
<dbReference type="SMR" id="B1YM02"/>
<dbReference type="STRING" id="262543.Exig_2510"/>
<dbReference type="KEGG" id="esi:Exig_2510"/>
<dbReference type="eggNOG" id="COG0721">
    <property type="taxonomic scope" value="Bacteria"/>
</dbReference>
<dbReference type="HOGENOM" id="CLU_105899_6_1_9"/>
<dbReference type="OrthoDB" id="9813938at2"/>
<dbReference type="Proteomes" id="UP000001681">
    <property type="component" value="Chromosome"/>
</dbReference>
<dbReference type="GO" id="GO:0050566">
    <property type="term" value="F:asparaginyl-tRNA synthase (glutamine-hydrolyzing) activity"/>
    <property type="evidence" value="ECO:0007669"/>
    <property type="project" value="RHEA"/>
</dbReference>
<dbReference type="GO" id="GO:0005524">
    <property type="term" value="F:ATP binding"/>
    <property type="evidence" value="ECO:0007669"/>
    <property type="project" value="UniProtKB-KW"/>
</dbReference>
<dbReference type="GO" id="GO:0050567">
    <property type="term" value="F:glutaminyl-tRNA synthase (glutamine-hydrolyzing) activity"/>
    <property type="evidence" value="ECO:0007669"/>
    <property type="project" value="UniProtKB-UniRule"/>
</dbReference>
<dbReference type="GO" id="GO:0070681">
    <property type="term" value="P:glutaminyl-tRNAGln biosynthesis via transamidation"/>
    <property type="evidence" value="ECO:0007669"/>
    <property type="project" value="TreeGrafter"/>
</dbReference>
<dbReference type="GO" id="GO:0006450">
    <property type="term" value="P:regulation of translational fidelity"/>
    <property type="evidence" value="ECO:0007669"/>
    <property type="project" value="InterPro"/>
</dbReference>
<dbReference type="GO" id="GO:0006412">
    <property type="term" value="P:translation"/>
    <property type="evidence" value="ECO:0007669"/>
    <property type="project" value="UniProtKB-UniRule"/>
</dbReference>
<dbReference type="Gene3D" id="1.10.20.60">
    <property type="entry name" value="Glu-tRNAGln amidotransferase C subunit, N-terminal domain"/>
    <property type="match status" value="1"/>
</dbReference>
<dbReference type="HAMAP" id="MF_00122">
    <property type="entry name" value="GatC"/>
    <property type="match status" value="1"/>
</dbReference>
<dbReference type="InterPro" id="IPR036113">
    <property type="entry name" value="Asp/Glu-ADT_sf_sub_c"/>
</dbReference>
<dbReference type="InterPro" id="IPR003837">
    <property type="entry name" value="GatC"/>
</dbReference>
<dbReference type="NCBIfam" id="TIGR00135">
    <property type="entry name" value="gatC"/>
    <property type="match status" value="1"/>
</dbReference>
<dbReference type="PANTHER" id="PTHR15004">
    <property type="entry name" value="GLUTAMYL-TRNA(GLN) AMIDOTRANSFERASE SUBUNIT C, MITOCHONDRIAL"/>
    <property type="match status" value="1"/>
</dbReference>
<dbReference type="PANTHER" id="PTHR15004:SF0">
    <property type="entry name" value="GLUTAMYL-TRNA(GLN) AMIDOTRANSFERASE SUBUNIT C, MITOCHONDRIAL"/>
    <property type="match status" value="1"/>
</dbReference>
<dbReference type="Pfam" id="PF02686">
    <property type="entry name" value="GatC"/>
    <property type="match status" value="1"/>
</dbReference>
<dbReference type="SUPFAM" id="SSF141000">
    <property type="entry name" value="Glu-tRNAGln amidotransferase C subunit"/>
    <property type="match status" value="1"/>
</dbReference>
<organism>
    <name type="scientific">Exiguobacterium sibiricum (strain DSM 17290 / CCUG 55495 / CIP 109462 / JCM 13490 / 255-15)</name>
    <dbReference type="NCBI Taxonomy" id="262543"/>
    <lineage>
        <taxon>Bacteria</taxon>
        <taxon>Bacillati</taxon>
        <taxon>Bacillota</taxon>
        <taxon>Bacilli</taxon>
        <taxon>Bacillales</taxon>
        <taxon>Bacillales Family XII. Incertae Sedis</taxon>
        <taxon>Exiguobacterium</taxon>
    </lineage>
</organism>
<reference key="1">
    <citation type="submission" date="2008-04" db="EMBL/GenBank/DDBJ databases">
        <title>Complete sequence of chromosome of Exiguobacterium sibiricum 255-15.</title>
        <authorList>
            <consortium name="US DOE Joint Genome Institute"/>
            <person name="Copeland A."/>
            <person name="Lucas S."/>
            <person name="Lapidus A."/>
            <person name="Glavina del Rio T."/>
            <person name="Dalin E."/>
            <person name="Tice H."/>
            <person name="Bruce D."/>
            <person name="Goodwin L."/>
            <person name="Pitluck S."/>
            <person name="Kiss H."/>
            <person name="Chertkov O."/>
            <person name="Monk C."/>
            <person name="Brettin T."/>
            <person name="Detter J.C."/>
            <person name="Han C."/>
            <person name="Kuske C.R."/>
            <person name="Schmutz J."/>
            <person name="Larimer F."/>
            <person name="Land M."/>
            <person name="Hauser L."/>
            <person name="Kyrpides N."/>
            <person name="Mikhailova N."/>
            <person name="Vishnivetskaya T."/>
            <person name="Rodrigues D.F."/>
            <person name="Gilichinsky D."/>
            <person name="Tiedje J."/>
            <person name="Richardson P."/>
        </authorList>
    </citation>
    <scope>NUCLEOTIDE SEQUENCE [LARGE SCALE GENOMIC DNA]</scope>
    <source>
        <strain>DSM 17290 / CCUG 55495 / CIP 109462 / JCM 13490 / 255-15</strain>
    </source>
</reference>
<evidence type="ECO:0000255" key="1">
    <source>
        <dbReference type="HAMAP-Rule" id="MF_00122"/>
    </source>
</evidence>
<accession>B1YM02</accession>
<gene>
    <name evidence="1" type="primary">gatC</name>
    <name type="ordered locus">Exig_2510</name>
</gene>
<name>GATC_EXIS2</name>
<proteinExistence type="inferred from homology"/>
<keyword id="KW-0067">ATP-binding</keyword>
<keyword id="KW-0436">Ligase</keyword>
<keyword id="KW-0547">Nucleotide-binding</keyword>
<keyword id="KW-0648">Protein biosynthesis</keyword>
<keyword id="KW-1185">Reference proteome</keyword>